<dbReference type="EMBL" id="CR857820">
    <property type="protein sequence ID" value="CAH90078.1"/>
    <property type="molecule type" value="mRNA"/>
</dbReference>
<dbReference type="RefSeq" id="NP_001128768.1">
    <property type="nucleotide sequence ID" value="NM_001135296.2"/>
</dbReference>
<dbReference type="SMR" id="Q5RDS9"/>
<dbReference type="FunCoup" id="Q5RDS9">
    <property type="interactions" value="312"/>
</dbReference>
<dbReference type="STRING" id="9601.ENSPPYP00000023260"/>
<dbReference type="Ensembl" id="ENSPPYT00000041339.1">
    <property type="protein sequence ID" value="ENSPPYP00000026918.1"/>
    <property type="gene ID" value="ENSPPYG00000020777.3"/>
</dbReference>
<dbReference type="GeneID" id="100189666"/>
<dbReference type="KEGG" id="pon:100189666"/>
<dbReference type="CTD" id="2258"/>
<dbReference type="eggNOG" id="KOG3885">
    <property type="taxonomic scope" value="Eukaryota"/>
</dbReference>
<dbReference type="GeneTree" id="ENSGT00940000163347"/>
<dbReference type="HOGENOM" id="CLU_081609_2_0_1"/>
<dbReference type="InParanoid" id="Q5RDS9"/>
<dbReference type="OMA" id="MECKFKE"/>
<dbReference type="OrthoDB" id="6158176at2759"/>
<dbReference type="TreeFam" id="TF317805"/>
<dbReference type="Proteomes" id="UP000001595">
    <property type="component" value="Chromosome X"/>
</dbReference>
<dbReference type="GO" id="GO:0030424">
    <property type="term" value="C:axon"/>
    <property type="evidence" value="ECO:0000250"/>
    <property type="project" value="UniProtKB"/>
</dbReference>
<dbReference type="GO" id="GO:0005737">
    <property type="term" value="C:cytoplasm"/>
    <property type="evidence" value="ECO:0000250"/>
    <property type="project" value="UniProtKB"/>
</dbReference>
<dbReference type="GO" id="GO:0030425">
    <property type="term" value="C:dendrite"/>
    <property type="evidence" value="ECO:0000250"/>
    <property type="project" value="UniProtKB"/>
</dbReference>
<dbReference type="GO" id="GO:0030175">
    <property type="term" value="C:filopodium"/>
    <property type="evidence" value="ECO:0000250"/>
    <property type="project" value="UniProtKB"/>
</dbReference>
<dbReference type="GO" id="GO:0030426">
    <property type="term" value="C:growth cone"/>
    <property type="evidence" value="ECO:0000250"/>
    <property type="project" value="UniProtKB"/>
</dbReference>
<dbReference type="GO" id="GO:0014704">
    <property type="term" value="C:intercalated disc"/>
    <property type="evidence" value="ECO:0000250"/>
    <property type="project" value="UniProtKB"/>
</dbReference>
<dbReference type="GO" id="GO:0005874">
    <property type="term" value="C:microtubule"/>
    <property type="evidence" value="ECO:0000250"/>
    <property type="project" value="UniProtKB"/>
</dbReference>
<dbReference type="GO" id="GO:0043005">
    <property type="term" value="C:neuron projection"/>
    <property type="evidence" value="ECO:0000250"/>
    <property type="project" value="UniProtKB"/>
</dbReference>
<dbReference type="GO" id="GO:0005634">
    <property type="term" value="C:nucleus"/>
    <property type="evidence" value="ECO:0000250"/>
    <property type="project" value="UniProtKB"/>
</dbReference>
<dbReference type="GO" id="GO:0005886">
    <property type="term" value="C:plasma membrane"/>
    <property type="evidence" value="ECO:0000250"/>
    <property type="project" value="UniProtKB"/>
</dbReference>
<dbReference type="GO" id="GO:0042383">
    <property type="term" value="C:sarcolemma"/>
    <property type="evidence" value="ECO:0007669"/>
    <property type="project" value="UniProtKB-SubCell"/>
</dbReference>
<dbReference type="GO" id="GO:0048487">
    <property type="term" value="F:beta-tubulin binding"/>
    <property type="evidence" value="ECO:0000250"/>
    <property type="project" value="UniProtKB"/>
</dbReference>
<dbReference type="GO" id="GO:0008083">
    <property type="term" value="F:growth factor activity"/>
    <property type="evidence" value="ECO:0007669"/>
    <property type="project" value="InterPro"/>
</dbReference>
<dbReference type="GO" id="GO:0008017">
    <property type="term" value="F:microtubule binding"/>
    <property type="evidence" value="ECO:0000250"/>
    <property type="project" value="UniProtKB"/>
</dbReference>
<dbReference type="GO" id="GO:0017080">
    <property type="term" value="F:sodium channel regulator activity"/>
    <property type="evidence" value="ECO:0000250"/>
    <property type="project" value="UniProtKB"/>
</dbReference>
<dbReference type="GO" id="GO:0044325">
    <property type="term" value="F:transmembrane transporter binding"/>
    <property type="evidence" value="ECO:0000250"/>
    <property type="project" value="UniProtKB"/>
</dbReference>
<dbReference type="GO" id="GO:0021795">
    <property type="term" value="P:cerebral cortex cell migration"/>
    <property type="evidence" value="ECO:0000250"/>
    <property type="project" value="UniProtKB"/>
</dbReference>
<dbReference type="GO" id="GO:0045200">
    <property type="term" value="P:establishment of neuroblast polarity"/>
    <property type="evidence" value="ECO:0000250"/>
    <property type="project" value="UniProtKB"/>
</dbReference>
<dbReference type="GO" id="GO:0021766">
    <property type="term" value="P:hippocampus development"/>
    <property type="evidence" value="ECO:0000250"/>
    <property type="project" value="UniProtKB"/>
</dbReference>
<dbReference type="GO" id="GO:1904862">
    <property type="term" value="P:inhibitory synapse assembly"/>
    <property type="evidence" value="ECO:0000250"/>
    <property type="project" value="UniProtKB"/>
</dbReference>
<dbReference type="GO" id="GO:0007612">
    <property type="term" value="P:learning"/>
    <property type="evidence" value="ECO:0000250"/>
    <property type="project" value="UniProtKB"/>
</dbReference>
<dbReference type="GO" id="GO:0007613">
    <property type="term" value="P:memory"/>
    <property type="evidence" value="ECO:0000250"/>
    <property type="project" value="UniProtKB"/>
</dbReference>
<dbReference type="GO" id="GO:0046785">
    <property type="term" value="P:microtubule polymerization"/>
    <property type="evidence" value="ECO:0000250"/>
    <property type="project" value="UniProtKB"/>
</dbReference>
<dbReference type="GO" id="GO:0048671">
    <property type="term" value="P:negative regulation of collateral sprouting"/>
    <property type="evidence" value="ECO:0000250"/>
    <property type="project" value="UniProtKB"/>
</dbReference>
<dbReference type="GO" id="GO:0007026">
    <property type="term" value="P:negative regulation of microtubule depolymerization"/>
    <property type="evidence" value="ECO:0000250"/>
    <property type="project" value="UniProtKB"/>
</dbReference>
<dbReference type="GO" id="GO:0001764">
    <property type="term" value="P:neuron migration"/>
    <property type="evidence" value="ECO:0000250"/>
    <property type="project" value="UniProtKB"/>
</dbReference>
<dbReference type="GO" id="GO:1905152">
    <property type="term" value="P:positive regulation of voltage-gated sodium channel activity"/>
    <property type="evidence" value="ECO:0000250"/>
    <property type="project" value="UniProtKB"/>
</dbReference>
<dbReference type="GO" id="GO:0072659">
    <property type="term" value="P:protein localization to plasma membrane"/>
    <property type="evidence" value="ECO:0000250"/>
    <property type="project" value="UniProtKB"/>
</dbReference>
<dbReference type="CDD" id="cd23329">
    <property type="entry name" value="beta-trefoil_FGF13"/>
    <property type="match status" value="1"/>
</dbReference>
<dbReference type="FunFam" id="2.80.10.50:FF:000001">
    <property type="entry name" value="Fibroblast growth factor"/>
    <property type="match status" value="1"/>
</dbReference>
<dbReference type="Gene3D" id="2.80.10.50">
    <property type="match status" value="1"/>
</dbReference>
<dbReference type="InterPro" id="IPR002209">
    <property type="entry name" value="Fibroblast_GF_fam"/>
</dbReference>
<dbReference type="InterPro" id="IPR008996">
    <property type="entry name" value="IL1/FGF"/>
</dbReference>
<dbReference type="PANTHER" id="PTHR11486">
    <property type="entry name" value="FIBROBLAST GROWTH FACTOR"/>
    <property type="match status" value="1"/>
</dbReference>
<dbReference type="Pfam" id="PF00167">
    <property type="entry name" value="FGF"/>
    <property type="match status" value="1"/>
</dbReference>
<dbReference type="PRINTS" id="PR00263">
    <property type="entry name" value="HBGFFGF"/>
</dbReference>
<dbReference type="PRINTS" id="PR00262">
    <property type="entry name" value="IL1HBGF"/>
</dbReference>
<dbReference type="SMART" id="SM00442">
    <property type="entry name" value="FGF"/>
    <property type="match status" value="1"/>
</dbReference>
<dbReference type="SUPFAM" id="SSF50353">
    <property type="entry name" value="Cytokine"/>
    <property type="match status" value="1"/>
</dbReference>
<dbReference type="PROSITE" id="PS00247">
    <property type="entry name" value="HBGF_FGF"/>
    <property type="match status" value="1"/>
</dbReference>
<gene>
    <name type="primary">FGF13</name>
</gene>
<evidence type="ECO:0000250" key="1"/>
<evidence type="ECO:0000250" key="2">
    <source>
        <dbReference type="UniProtKB" id="P61329"/>
    </source>
</evidence>
<evidence type="ECO:0000250" key="3">
    <source>
        <dbReference type="UniProtKB" id="P70377"/>
    </source>
</evidence>
<evidence type="ECO:0000250" key="4">
    <source>
        <dbReference type="UniProtKB" id="Q92913"/>
    </source>
</evidence>
<evidence type="ECO:0000256" key="5">
    <source>
        <dbReference type="SAM" id="MobiDB-lite"/>
    </source>
</evidence>
<evidence type="ECO:0000305" key="6"/>
<protein>
    <recommendedName>
        <fullName>Fibroblast growth factor 13</fullName>
        <shortName>FGF-13</shortName>
    </recommendedName>
</protein>
<feature type="chain" id="PRO_0000147609" description="Fibroblast growth factor 13">
    <location>
        <begin position="1"/>
        <end position="245"/>
    </location>
</feature>
<feature type="region of interest" description="Mediates targeting to the nucleus" evidence="1">
    <location>
        <begin position="1"/>
        <end position="62"/>
    </location>
</feature>
<feature type="region of interest" description="Disordered" evidence="5">
    <location>
        <begin position="1"/>
        <end position="36"/>
    </location>
</feature>
<feature type="region of interest" description="Mediates interaction with sodium channels" evidence="1">
    <location>
        <begin position="67"/>
        <end position="201"/>
    </location>
</feature>
<feature type="region of interest" description="Disordered" evidence="5">
    <location>
        <begin position="213"/>
        <end position="245"/>
    </location>
</feature>
<feature type="compositionally biased region" description="Polar residues" evidence="5">
    <location>
        <begin position="215"/>
        <end position="245"/>
    </location>
</feature>
<feature type="modified residue" description="Phosphoserine" evidence="4">
    <location>
        <position position="208"/>
    </location>
</feature>
<sequence length="245" mass="27564">MAAAIASSLIRQKRQAREREKSNACKCVSSPSKGKTSCDKNKLNVFSRVKLFGSKKRRRRRPEPQLKGIVTKLYSRQGYHLQLQADGTIDGTKDEDSTYTLFNLIPVGLRVVAIQGVQTKLYLAMNSEGYLYTSELFTPECKFKESVFENYYVTYSSMIYRQQQSGRGWYLGLNKEGEIMKGNHVKKNKPAAHFLPKPLKVAMYKEPSLHDLTEFSRSGSGTPTKSRSVSGVLNGGKSMSHNEST</sequence>
<proteinExistence type="evidence at transcript level"/>
<organism>
    <name type="scientific">Pongo abelii</name>
    <name type="common">Sumatran orangutan</name>
    <name type="synonym">Pongo pygmaeus abelii</name>
    <dbReference type="NCBI Taxonomy" id="9601"/>
    <lineage>
        <taxon>Eukaryota</taxon>
        <taxon>Metazoa</taxon>
        <taxon>Chordata</taxon>
        <taxon>Craniata</taxon>
        <taxon>Vertebrata</taxon>
        <taxon>Euteleostomi</taxon>
        <taxon>Mammalia</taxon>
        <taxon>Eutheria</taxon>
        <taxon>Euarchontoglires</taxon>
        <taxon>Primates</taxon>
        <taxon>Haplorrhini</taxon>
        <taxon>Catarrhini</taxon>
        <taxon>Hominidae</taxon>
        <taxon>Pongo</taxon>
    </lineage>
</organism>
<reference key="1">
    <citation type="submission" date="2004-11" db="EMBL/GenBank/DDBJ databases">
        <authorList>
            <consortium name="The German cDNA consortium"/>
        </authorList>
    </citation>
    <scope>NUCLEOTIDE SEQUENCE [LARGE SCALE MRNA]</scope>
    <source>
        <tissue>Brain cortex</tissue>
    </source>
</reference>
<keyword id="KW-1003">Cell membrane</keyword>
<keyword id="KW-0966">Cell projection</keyword>
<keyword id="KW-0963">Cytoplasm</keyword>
<keyword id="KW-0472">Membrane</keyword>
<keyword id="KW-0493">Microtubule</keyword>
<keyword id="KW-0524">Neurogenesis</keyword>
<keyword id="KW-0539">Nucleus</keyword>
<keyword id="KW-0597">Phosphoprotein</keyword>
<keyword id="KW-1185">Reference proteome</keyword>
<name>FGF13_PONAB</name>
<accession>Q5RDS9</accession>
<comment type="function">
    <text evidence="3 4">Microtubule-binding protein which directly binds tubulin and is involved in both polymerization and stabilization of microtubules (By similarity). Through its action on microtubules, may participate in the refinement of axons by negatively regulating axonal and leading processes branching (By similarity). Plays a crucial role in neuron polarization and migration in the cerebral cortex and the hippocampus (By similarity). Regulates voltage-gated sodium channel transport and function (By similarity). May also play a role in MAPK signaling (By similarity). Required for the development of axonal initial segment-targeting inhibitory GABAergic synapses made by chandelier neurons (By similarity).</text>
</comment>
<comment type="subunit">
    <text evidence="4">Interacts with SCN8A; regulates SCN8A activity. Interacts with SCN1A; may regulate SCN1A activity. Interacts with SCN5A; the interaction is direct and may regulate SNC5A density at membranes and function. May also interact with SCN2A and SCN11A. Interacts with MAPK8IP2; may regulate the MAPK8IP2 scaffolding activity.</text>
</comment>
<comment type="subcellular location">
    <subcellularLocation>
        <location evidence="3">Cell projection</location>
        <location evidence="3">Filopodium</location>
    </subcellularLocation>
    <subcellularLocation>
        <location evidence="3">Cell projection</location>
        <location evidence="3">Growth cone</location>
    </subcellularLocation>
    <subcellularLocation>
        <location evidence="3">Cell projection</location>
        <location evidence="3">Dendrite</location>
    </subcellularLocation>
    <subcellularLocation>
        <location evidence="3">Cell membrane</location>
        <location evidence="3">Sarcolemma</location>
    </subcellularLocation>
    <subcellularLocation>
        <location evidence="3">Cytoplasm</location>
    </subcellularLocation>
    <subcellularLocation>
        <location evidence="2">Nucleus</location>
    </subcellularLocation>
    <text evidence="3">Not secreted. Localizes to the lateral membrane and intercalated disks of myocytes.</text>
</comment>
<comment type="PTM">
    <text evidence="1">May be phosphorylated.</text>
</comment>
<comment type="similarity">
    <text evidence="6">Belongs to the heparin-binding growth factors family.</text>
</comment>